<sequence length="297" mass="33273">MMDFDERVPCSSNMYLPSCTYYVSGPDFSSLPSFLPQTPSSRPMTYSYSSNLPQVQPVREVTFREYAIDPSSKWHPRNNLPHCYSAEEIMHRDCLPSTTTASMGEVFGKSTANVYHHPSANVSSNFYSTVGRNGVLPQAFDQFFETAYGTAENPSSADYPPDKSGEKAPAAAGATAATSSSEGGCGGAAAAAGKERRRRPESGSSPESSSGNNEEKSGSSSGQRTRKKRCPYTKYQIRELEREFFFSVYINKEKRLQLSRMLNLTDRQVKIWFQNRRMKEKKINRDRLQYYSANPLL</sequence>
<organism>
    <name type="scientific">Gallus gallus</name>
    <name type="common">Chicken</name>
    <dbReference type="NCBI Taxonomy" id="9031"/>
    <lineage>
        <taxon>Eukaryota</taxon>
        <taxon>Metazoa</taxon>
        <taxon>Chordata</taxon>
        <taxon>Craniata</taxon>
        <taxon>Vertebrata</taxon>
        <taxon>Euteleostomi</taxon>
        <taxon>Archelosauria</taxon>
        <taxon>Archosauria</taxon>
        <taxon>Dinosauria</taxon>
        <taxon>Saurischia</taxon>
        <taxon>Theropoda</taxon>
        <taxon>Coelurosauria</taxon>
        <taxon>Aves</taxon>
        <taxon>Neognathae</taxon>
        <taxon>Galloanserae</taxon>
        <taxon>Galliformes</taxon>
        <taxon>Phasianidae</taxon>
        <taxon>Phasianinae</taxon>
        <taxon>Gallus</taxon>
    </lineage>
</organism>
<name>HXA11_CHICK</name>
<dbReference type="EMBL" id="M81250">
    <property type="protein sequence ID" value="AAA48823.1"/>
    <property type="molecule type" value="mRNA"/>
</dbReference>
<dbReference type="RefSeq" id="NP_989950.1">
    <property type="nucleotide sequence ID" value="NM_204619.2"/>
</dbReference>
<dbReference type="SMR" id="P31258"/>
<dbReference type="FunCoup" id="P31258">
    <property type="interactions" value="1"/>
</dbReference>
<dbReference type="STRING" id="9031.ENSGALP00000046000"/>
<dbReference type="PaxDb" id="9031-ENSGALP00000042845"/>
<dbReference type="Ensembl" id="ENSGALT00010004201.1">
    <property type="protein sequence ID" value="ENSGALP00010002498.1"/>
    <property type="gene ID" value="ENSGALG00010001848.1"/>
</dbReference>
<dbReference type="GeneID" id="395327"/>
<dbReference type="KEGG" id="gga:395327"/>
<dbReference type="CTD" id="3207"/>
<dbReference type="VEuPathDB" id="HostDB:geneid_395327"/>
<dbReference type="eggNOG" id="KOG0487">
    <property type="taxonomic scope" value="Eukaryota"/>
</dbReference>
<dbReference type="GeneTree" id="ENSGT00940000158311"/>
<dbReference type="HOGENOM" id="CLU_079662_0_0_1"/>
<dbReference type="InParanoid" id="P31258"/>
<dbReference type="OMA" id="HCYSADE"/>
<dbReference type="OrthoDB" id="6159439at2759"/>
<dbReference type="PhylomeDB" id="P31258"/>
<dbReference type="PRO" id="PR:P31258"/>
<dbReference type="Proteomes" id="UP000000539">
    <property type="component" value="Chromosome 2"/>
</dbReference>
<dbReference type="Bgee" id="ENSGALG00000040021">
    <property type="expression patterns" value="Expressed in colon and 3 other cell types or tissues"/>
</dbReference>
<dbReference type="GO" id="GO:0005654">
    <property type="term" value="C:nucleoplasm"/>
    <property type="evidence" value="ECO:0007669"/>
    <property type="project" value="Ensembl"/>
</dbReference>
<dbReference type="GO" id="GO:0005634">
    <property type="term" value="C:nucleus"/>
    <property type="evidence" value="ECO:0000318"/>
    <property type="project" value="GO_Central"/>
</dbReference>
<dbReference type="GO" id="GO:0032993">
    <property type="term" value="C:protein-DNA complex"/>
    <property type="evidence" value="ECO:0007669"/>
    <property type="project" value="Ensembl"/>
</dbReference>
<dbReference type="GO" id="GO:0005667">
    <property type="term" value="C:transcription regulator complex"/>
    <property type="evidence" value="ECO:0007669"/>
    <property type="project" value="Ensembl"/>
</dbReference>
<dbReference type="GO" id="GO:0000981">
    <property type="term" value="F:DNA-binding transcription factor activity, RNA polymerase II-specific"/>
    <property type="evidence" value="ECO:0000318"/>
    <property type="project" value="GO_Central"/>
</dbReference>
<dbReference type="GO" id="GO:0000978">
    <property type="term" value="F:RNA polymerase II cis-regulatory region sequence-specific DNA binding"/>
    <property type="evidence" value="ECO:0000318"/>
    <property type="project" value="GO_Central"/>
</dbReference>
<dbReference type="GO" id="GO:0009952">
    <property type="term" value="P:anterior/posterior pattern specification"/>
    <property type="evidence" value="ECO:0007669"/>
    <property type="project" value="Ensembl"/>
</dbReference>
<dbReference type="GO" id="GO:0001658">
    <property type="term" value="P:branching involved in ureteric bud morphogenesis"/>
    <property type="evidence" value="ECO:0007669"/>
    <property type="project" value="Ensembl"/>
</dbReference>
<dbReference type="GO" id="GO:0060351">
    <property type="term" value="P:cartilage development involved in endochondral bone morphogenesis"/>
    <property type="evidence" value="ECO:0007669"/>
    <property type="project" value="Ensembl"/>
</dbReference>
<dbReference type="GO" id="GO:0002063">
    <property type="term" value="P:chondrocyte development"/>
    <property type="evidence" value="ECO:0007669"/>
    <property type="project" value="Ensembl"/>
</dbReference>
<dbReference type="GO" id="GO:0048589">
    <property type="term" value="P:developmental growth"/>
    <property type="evidence" value="ECO:0007669"/>
    <property type="project" value="Ensembl"/>
</dbReference>
<dbReference type="GO" id="GO:0009953">
    <property type="term" value="P:dorsal/ventral pattern formation"/>
    <property type="evidence" value="ECO:0007669"/>
    <property type="project" value="Ensembl"/>
</dbReference>
<dbReference type="GO" id="GO:0042733">
    <property type="term" value="P:embryonic digit morphogenesis"/>
    <property type="evidence" value="ECO:0007669"/>
    <property type="project" value="Ensembl"/>
</dbReference>
<dbReference type="GO" id="GO:0035115">
    <property type="term" value="P:embryonic forelimb morphogenesis"/>
    <property type="evidence" value="ECO:0007669"/>
    <property type="project" value="Ensembl"/>
</dbReference>
<dbReference type="GO" id="GO:0060272">
    <property type="term" value="P:embryonic skeletal joint morphogenesis"/>
    <property type="evidence" value="ECO:0000318"/>
    <property type="project" value="GO_Central"/>
</dbReference>
<dbReference type="GO" id="GO:0008584">
    <property type="term" value="P:male gonad development"/>
    <property type="evidence" value="ECO:0007669"/>
    <property type="project" value="Ensembl"/>
</dbReference>
<dbReference type="GO" id="GO:0007501">
    <property type="term" value="P:mesodermal cell fate specification"/>
    <property type="evidence" value="ECO:0007669"/>
    <property type="project" value="Ensembl"/>
</dbReference>
<dbReference type="GO" id="GO:0001656">
    <property type="term" value="P:metanephros development"/>
    <property type="evidence" value="ECO:0007669"/>
    <property type="project" value="Ensembl"/>
</dbReference>
<dbReference type="GO" id="GO:0001759">
    <property type="term" value="P:organ induction"/>
    <property type="evidence" value="ECO:0007669"/>
    <property type="project" value="Ensembl"/>
</dbReference>
<dbReference type="GO" id="GO:1902761">
    <property type="term" value="P:positive regulation of chondrocyte development"/>
    <property type="evidence" value="ECO:0007669"/>
    <property type="project" value="Ensembl"/>
</dbReference>
<dbReference type="GO" id="GO:0045893">
    <property type="term" value="P:positive regulation of DNA-templated transcription"/>
    <property type="evidence" value="ECO:0007669"/>
    <property type="project" value="Ensembl"/>
</dbReference>
<dbReference type="GO" id="GO:0009954">
    <property type="term" value="P:proximal/distal pattern formation"/>
    <property type="evidence" value="ECO:0007669"/>
    <property type="project" value="Ensembl"/>
</dbReference>
<dbReference type="GO" id="GO:0006357">
    <property type="term" value="P:regulation of transcription by RNA polymerase II"/>
    <property type="evidence" value="ECO:0000318"/>
    <property type="project" value="GO_Central"/>
</dbReference>
<dbReference type="GO" id="GO:0007338">
    <property type="term" value="P:single fertilization"/>
    <property type="evidence" value="ECO:0007669"/>
    <property type="project" value="Ensembl"/>
</dbReference>
<dbReference type="GO" id="GO:0007283">
    <property type="term" value="P:spermatogenesis"/>
    <property type="evidence" value="ECO:0007669"/>
    <property type="project" value="Ensembl"/>
</dbReference>
<dbReference type="CDD" id="cd00086">
    <property type="entry name" value="homeodomain"/>
    <property type="match status" value="1"/>
</dbReference>
<dbReference type="FunFam" id="1.10.10.60:FF:000166">
    <property type="entry name" value="homeobox protein Hox-C11"/>
    <property type="match status" value="1"/>
</dbReference>
<dbReference type="Gene3D" id="1.10.10.60">
    <property type="entry name" value="Homeodomain-like"/>
    <property type="match status" value="1"/>
</dbReference>
<dbReference type="InterPro" id="IPR021918">
    <property type="entry name" value="DUF3528"/>
</dbReference>
<dbReference type="InterPro" id="IPR001356">
    <property type="entry name" value="HD"/>
</dbReference>
<dbReference type="InterPro" id="IPR020479">
    <property type="entry name" value="HD_metazoa"/>
</dbReference>
<dbReference type="InterPro" id="IPR017970">
    <property type="entry name" value="Homeobox_CS"/>
</dbReference>
<dbReference type="InterPro" id="IPR009057">
    <property type="entry name" value="Homeodomain-like_sf"/>
</dbReference>
<dbReference type="PANTHER" id="PTHR46092:SF3">
    <property type="entry name" value="HOMEOBOX PROTEIN HOX-A11"/>
    <property type="match status" value="1"/>
</dbReference>
<dbReference type="PANTHER" id="PTHR46092">
    <property type="entry name" value="HOMEOBOX PROTEIN HOX-A11-RELATED"/>
    <property type="match status" value="1"/>
</dbReference>
<dbReference type="Pfam" id="PF12045">
    <property type="entry name" value="DUF3528"/>
    <property type="match status" value="1"/>
</dbReference>
<dbReference type="Pfam" id="PF00046">
    <property type="entry name" value="Homeodomain"/>
    <property type="match status" value="1"/>
</dbReference>
<dbReference type="PRINTS" id="PR00024">
    <property type="entry name" value="HOMEOBOX"/>
</dbReference>
<dbReference type="SMART" id="SM00389">
    <property type="entry name" value="HOX"/>
    <property type="match status" value="1"/>
</dbReference>
<dbReference type="SUPFAM" id="SSF46689">
    <property type="entry name" value="Homeodomain-like"/>
    <property type="match status" value="1"/>
</dbReference>
<dbReference type="PROSITE" id="PS00027">
    <property type="entry name" value="HOMEOBOX_1"/>
    <property type="match status" value="1"/>
</dbReference>
<dbReference type="PROSITE" id="PS50071">
    <property type="entry name" value="HOMEOBOX_2"/>
    <property type="match status" value="1"/>
</dbReference>
<reference key="1">
    <citation type="journal article" date="1992" name="Dev. Dyn.">
        <title>The pattern of expression of the chicken homolog of HOX1I in the developing limb suggests a possible role in the ectodermal inhibition of chondrogenesis.</title>
        <authorList>
            <person name="Rogina B."/>
            <person name="Coelho C.N."/>
            <person name="Kosher R.A."/>
            <person name="Upholt W.B."/>
        </authorList>
    </citation>
    <scope>NUCLEOTIDE SEQUENCE [MRNA]</scope>
</reference>
<gene>
    <name type="primary">HOXA11</name>
    <name type="synonym">GHOX1I</name>
</gene>
<comment type="function">
    <text>Sequence-specific transcription factor which is part of a developmental regulatory system that provides cells with specific positional identities on the anterior-posterior axis.</text>
</comment>
<comment type="subcellular location">
    <subcellularLocation>
        <location>Nucleus</location>
    </subcellularLocation>
</comment>
<comment type="similarity">
    <text evidence="3">Belongs to the Abd-B homeobox family.</text>
</comment>
<accession>P31258</accession>
<keyword id="KW-0217">Developmental protein</keyword>
<keyword id="KW-0238">DNA-binding</keyword>
<keyword id="KW-0371">Homeobox</keyword>
<keyword id="KW-0539">Nucleus</keyword>
<keyword id="KW-1185">Reference proteome</keyword>
<keyword id="KW-0804">Transcription</keyword>
<keyword id="KW-0805">Transcription regulation</keyword>
<evidence type="ECO:0000255" key="1">
    <source>
        <dbReference type="PROSITE-ProRule" id="PRU00108"/>
    </source>
</evidence>
<evidence type="ECO:0000256" key="2">
    <source>
        <dbReference type="SAM" id="MobiDB-lite"/>
    </source>
</evidence>
<evidence type="ECO:0000305" key="3"/>
<protein>
    <recommendedName>
        <fullName>Homeobox protein Hox-A11</fullName>
    </recommendedName>
    <alternativeName>
        <fullName>Ghox-1I</fullName>
    </alternativeName>
    <alternativeName>
        <fullName>Homeobox protein Hox-1.9</fullName>
        <shortName>Chox-1.9</shortName>
    </alternativeName>
</protein>
<proteinExistence type="evidence at transcript level"/>
<feature type="chain" id="PRO_0000200097" description="Homeobox protein Hox-A11">
    <location>
        <begin position="1"/>
        <end position="297"/>
    </location>
</feature>
<feature type="DNA-binding region" description="Homeobox" evidence="1">
    <location>
        <begin position="225"/>
        <end position="284"/>
    </location>
</feature>
<feature type="region of interest" description="Disordered" evidence="2">
    <location>
        <begin position="151"/>
        <end position="230"/>
    </location>
</feature>
<feature type="compositionally biased region" description="Low complexity" evidence="2">
    <location>
        <begin position="167"/>
        <end position="192"/>
    </location>
</feature>
<feature type="compositionally biased region" description="Low complexity" evidence="2">
    <location>
        <begin position="202"/>
        <end position="222"/>
    </location>
</feature>